<reference key="1">
    <citation type="journal article" date="2011" name="J. Bacteriol.">
        <title>Comparative genomics of 28 Salmonella enterica isolates: evidence for CRISPR-mediated adaptive sublineage evolution.</title>
        <authorList>
            <person name="Fricke W.F."/>
            <person name="Mammel M.K."/>
            <person name="McDermott P.F."/>
            <person name="Tartera C."/>
            <person name="White D.G."/>
            <person name="Leclerc J.E."/>
            <person name="Ravel J."/>
            <person name="Cebula T.A."/>
        </authorList>
    </citation>
    <scope>NUCLEOTIDE SEQUENCE [LARGE SCALE GENOMIC DNA]</scope>
    <source>
        <strain>SL254</strain>
    </source>
</reference>
<gene>
    <name evidence="1" type="primary">iscA</name>
    <name type="ordered locus">SNSL254_A2740</name>
</gene>
<comment type="function">
    <text evidence="1">Is able to transfer iron-sulfur clusters to apo-ferredoxin. Multiple cycles of [2Fe2S] cluster formation and transfer are observed, suggesting that IscA acts catalytically. Recruits intracellular free iron so as to provide iron for the assembly of transient iron-sulfur cluster in IscU in the presence of IscS, L-cysteine and the thioredoxin reductase system TrxA/TrxB.</text>
</comment>
<comment type="cofactor">
    <cofactor evidence="1">
        <name>Fe cation</name>
        <dbReference type="ChEBI" id="CHEBI:24875"/>
    </cofactor>
    <text evidence="1">Binds 2 iron ions per dimer. The dimer may bind additional iron ions.</text>
</comment>
<comment type="subunit">
    <text evidence="1">Homodimer; may form tetramers and higher multimers.</text>
</comment>
<comment type="similarity">
    <text evidence="1">Belongs to the HesB/IscA family.</text>
</comment>
<sequence>MSITLSDSAAARVNIFLANRGKGFGLRLGVRTSGCSGMAYVLEFVDEPMAEDTVFEDKGVKVVVDGKSLQFLDGTQLDFVKEGLNEGFKFSNPNVKDECGCGESFHV</sequence>
<dbReference type="EMBL" id="CP001113">
    <property type="protein sequence ID" value="ACF64370.1"/>
    <property type="molecule type" value="Genomic_DNA"/>
</dbReference>
<dbReference type="RefSeq" id="WP_000028949.1">
    <property type="nucleotide sequence ID" value="NC_011080.1"/>
</dbReference>
<dbReference type="SMR" id="B4T0S0"/>
<dbReference type="KEGG" id="see:SNSL254_A2740"/>
<dbReference type="HOGENOM" id="CLU_069054_5_1_6"/>
<dbReference type="Proteomes" id="UP000008824">
    <property type="component" value="Chromosome"/>
</dbReference>
<dbReference type="GO" id="GO:0005829">
    <property type="term" value="C:cytosol"/>
    <property type="evidence" value="ECO:0007669"/>
    <property type="project" value="TreeGrafter"/>
</dbReference>
<dbReference type="GO" id="GO:0051537">
    <property type="term" value="F:2 iron, 2 sulfur cluster binding"/>
    <property type="evidence" value="ECO:0007669"/>
    <property type="project" value="TreeGrafter"/>
</dbReference>
<dbReference type="GO" id="GO:0005506">
    <property type="term" value="F:iron ion binding"/>
    <property type="evidence" value="ECO:0007669"/>
    <property type="project" value="UniProtKB-UniRule"/>
</dbReference>
<dbReference type="GO" id="GO:0016226">
    <property type="term" value="P:iron-sulfur cluster assembly"/>
    <property type="evidence" value="ECO:0007669"/>
    <property type="project" value="UniProtKB-UniRule"/>
</dbReference>
<dbReference type="FunFam" id="2.60.300.12:FF:000001">
    <property type="entry name" value="Iron-binding protein IscA"/>
    <property type="match status" value="1"/>
</dbReference>
<dbReference type="Gene3D" id="2.60.300.12">
    <property type="entry name" value="HesB-like domain"/>
    <property type="match status" value="1"/>
</dbReference>
<dbReference type="HAMAP" id="MF_01429">
    <property type="entry name" value="Fe_S_insert_IscA"/>
    <property type="match status" value="1"/>
</dbReference>
<dbReference type="InterPro" id="IPR050322">
    <property type="entry name" value="Fe-S_cluster_asmbl/transfer"/>
</dbReference>
<dbReference type="InterPro" id="IPR000361">
    <property type="entry name" value="FeS_biogenesis"/>
</dbReference>
<dbReference type="InterPro" id="IPR016092">
    <property type="entry name" value="FeS_cluster_insertion"/>
</dbReference>
<dbReference type="InterPro" id="IPR017870">
    <property type="entry name" value="FeS_cluster_insertion_CS"/>
</dbReference>
<dbReference type="InterPro" id="IPR035903">
    <property type="entry name" value="HesB-like_dom_sf"/>
</dbReference>
<dbReference type="InterPro" id="IPR011302">
    <property type="entry name" value="IscA_proteobacteria"/>
</dbReference>
<dbReference type="NCBIfam" id="TIGR00049">
    <property type="entry name" value="iron-sulfur cluster assembly accessory protein"/>
    <property type="match status" value="1"/>
</dbReference>
<dbReference type="NCBIfam" id="TIGR02011">
    <property type="entry name" value="IscA"/>
    <property type="match status" value="1"/>
</dbReference>
<dbReference type="NCBIfam" id="NF007049">
    <property type="entry name" value="PRK09502.1"/>
    <property type="match status" value="1"/>
</dbReference>
<dbReference type="PANTHER" id="PTHR10072:SF41">
    <property type="entry name" value="IRON-SULFUR CLUSTER ASSEMBLY 1 HOMOLOG, MITOCHONDRIAL"/>
    <property type="match status" value="1"/>
</dbReference>
<dbReference type="PANTHER" id="PTHR10072">
    <property type="entry name" value="IRON-SULFUR CLUSTER ASSEMBLY PROTEIN"/>
    <property type="match status" value="1"/>
</dbReference>
<dbReference type="Pfam" id="PF01521">
    <property type="entry name" value="Fe-S_biosyn"/>
    <property type="match status" value="1"/>
</dbReference>
<dbReference type="SUPFAM" id="SSF89360">
    <property type="entry name" value="HesB-like domain"/>
    <property type="match status" value="1"/>
</dbReference>
<dbReference type="PROSITE" id="PS01152">
    <property type="entry name" value="HESB"/>
    <property type="match status" value="1"/>
</dbReference>
<proteinExistence type="inferred from homology"/>
<feature type="chain" id="PRO_1000145764" description="Iron-binding protein IscA">
    <location>
        <begin position="1"/>
        <end position="107"/>
    </location>
</feature>
<feature type="binding site" evidence="1">
    <location>
        <position position="35"/>
    </location>
    <ligand>
        <name>Fe cation</name>
        <dbReference type="ChEBI" id="CHEBI:24875"/>
    </ligand>
</feature>
<feature type="binding site" evidence="1">
    <location>
        <position position="99"/>
    </location>
    <ligand>
        <name>Fe cation</name>
        <dbReference type="ChEBI" id="CHEBI:24875"/>
    </ligand>
</feature>
<feature type="binding site" evidence="1">
    <location>
        <position position="101"/>
    </location>
    <ligand>
        <name>Fe cation</name>
        <dbReference type="ChEBI" id="CHEBI:24875"/>
    </ligand>
</feature>
<keyword id="KW-0408">Iron</keyword>
<keyword id="KW-0479">Metal-binding</keyword>
<evidence type="ECO:0000255" key="1">
    <source>
        <dbReference type="HAMAP-Rule" id="MF_01429"/>
    </source>
</evidence>
<accession>B4T0S0</accession>
<organism>
    <name type="scientific">Salmonella newport (strain SL254)</name>
    <dbReference type="NCBI Taxonomy" id="423368"/>
    <lineage>
        <taxon>Bacteria</taxon>
        <taxon>Pseudomonadati</taxon>
        <taxon>Pseudomonadota</taxon>
        <taxon>Gammaproteobacteria</taxon>
        <taxon>Enterobacterales</taxon>
        <taxon>Enterobacteriaceae</taxon>
        <taxon>Salmonella</taxon>
    </lineage>
</organism>
<name>ISCA_SALNS</name>
<protein>
    <recommendedName>
        <fullName evidence="1">Iron-binding protein IscA</fullName>
    </recommendedName>
    <alternativeName>
        <fullName evidence="1">Iron-sulfur cluster assembly protein</fullName>
    </alternativeName>
</protein>